<name>LOX6_ORYSJ</name>
<keyword id="KW-0223">Dioxygenase</keyword>
<keyword id="KW-0275">Fatty acid biosynthesis</keyword>
<keyword id="KW-0276">Fatty acid metabolism</keyword>
<keyword id="KW-0408">Iron</keyword>
<keyword id="KW-0444">Lipid biosynthesis</keyword>
<keyword id="KW-0443">Lipid metabolism</keyword>
<keyword id="KW-0479">Metal-binding</keyword>
<keyword id="KW-0560">Oxidoreductase</keyword>
<keyword id="KW-0925">Oxylipin biosynthesis</keyword>
<keyword id="KW-1185">Reference proteome</keyword>
<dbReference type="EC" id="1.13.11.12"/>
<dbReference type="EMBL" id="AC125472">
    <property type="protein sequence ID" value="AAO13474.1"/>
    <property type="status" value="ALT_SEQ"/>
    <property type="molecule type" value="Genomic_DNA"/>
</dbReference>
<dbReference type="EMBL" id="AC126223">
    <property type="protein sequence ID" value="AAN65431.1"/>
    <property type="status" value="ALT_SEQ"/>
    <property type="molecule type" value="Genomic_DNA"/>
</dbReference>
<dbReference type="EMBL" id="DP000009">
    <property type="protein sequence ID" value="ABF94297.1"/>
    <property type="molecule type" value="Genomic_DNA"/>
</dbReference>
<dbReference type="EMBL" id="AP008209">
    <property type="protein sequence ID" value="BAF11072.1"/>
    <property type="molecule type" value="Genomic_DNA"/>
</dbReference>
<dbReference type="EMBL" id="AP014959">
    <property type="protein sequence ID" value="BAS82610.1"/>
    <property type="molecule type" value="Genomic_DNA"/>
</dbReference>
<dbReference type="EMBL" id="AK121637">
    <property type="status" value="NOT_ANNOTATED_CDS"/>
    <property type="molecule type" value="mRNA"/>
</dbReference>
<dbReference type="RefSeq" id="XP_015630875.1">
    <property type="nucleotide sequence ID" value="XM_015775389.1"/>
</dbReference>
<dbReference type="SMR" id="Q8H016"/>
<dbReference type="FunCoup" id="Q8H016">
    <property type="interactions" value="257"/>
</dbReference>
<dbReference type="STRING" id="39947.Q8H016"/>
<dbReference type="PaxDb" id="39947-Q8H016"/>
<dbReference type="EnsemblPlants" id="Os03t0179900-01">
    <property type="protein sequence ID" value="Os03t0179900-01"/>
    <property type="gene ID" value="Os03g0179900"/>
</dbReference>
<dbReference type="Gramene" id="Os03t0179900-01">
    <property type="protein sequence ID" value="Os03t0179900-01"/>
    <property type="gene ID" value="Os03g0179900"/>
</dbReference>
<dbReference type="KEGG" id="dosa:Os03g0179900"/>
<dbReference type="eggNOG" id="ENOG502QQSP">
    <property type="taxonomic scope" value="Eukaryota"/>
</dbReference>
<dbReference type="HOGENOM" id="CLU_004282_0_0_1"/>
<dbReference type="InParanoid" id="Q8H016"/>
<dbReference type="OMA" id="CGPVHFV"/>
<dbReference type="OrthoDB" id="407298at2759"/>
<dbReference type="PlantReactome" id="R-OSA-1119332">
    <property type="pathway name" value="Jasmonic acid biosynthesis"/>
</dbReference>
<dbReference type="PlantReactome" id="R-OSA-1119566">
    <property type="pathway name" value="Divinyl ether biosynthesis II (13-LOX)"/>
</dbReference>
<dbReference type="PlantReactome" id="R-OSA-1119618">
    <property type="pathway name" value="13-LOX and 13-HPL pathway"/>
</dbReference>
<dbReference type="UniPathway" id="UPA00382"/>
<dbReference type="Proteomes" id="UP000000763">
    <property type="component" value="Chromosome 3"/>
</dbReference>
<dbReference type="Proteomes" id="UP000059680">
    <property type="component" value="Chromosome 3"/>
</dbReference>
<dbReference type="ExpressionAtlas" id="Q8H016">
    <property type="expression patterns" value="baseline and differential"/>
</dbReference>
<dbReference type="GO" id="GO:0016165">
    <property type="term" value="F:linoleate 13S-lipoxygenase activity"/>
    <property type="evidence" value="ECO:0007669"/>
    <property type="project" value="UniProtKB-EC"/>
</dbReference>
<dbReference type="GO" id="GO:0046872">
    <property type="term" value="F:metal ion binding"/>
    <property type="evidence" value="ECO:0007669"/>
    <property type="project" value="UniProtKB-KW"/>
</dbReference>
<dbReference type="GO" id="GO:0016702">
    <property type="term" value="F:oxidoreductase activity, acting on single donors with incorporation of molecular oxygen, incorporation of two atoms of oxygen"/>
    <property type="evidence" value="ECO:0000318"/>
    <property type="project" value="GO_Central"/>
</dbReference>
<dbReference type="GO" id="GO:0006633">
    <property type="term" value="P:fatty acid biosynthetic process"/>
    <property type="evidence" value="ECO:0007669"/>
    <property type="project" value="UniProtKB-KW"/>
</dbReference>
<dbReference type="GO" id="GO:0034440">
    <property type="term" value="P:lipid oxidation"/>
    <property type="evidence" value="ECO:0000318"/>
    <property type="project" value="GO_Central"/>
</dbReference>
<dbReference type="GO" id="GO:0031408">
    <property type="term" value="P:oxylipin biosynthetic process"/>
    <property type="evidence" value="ECO:0007669"/>
    <property type="project" value="UniProtKB-UniPathway"/>
</dbReference>
<dbReference type="CDD" id="cd01751">
    <property type="entry name" value="PLAT_LH2"/>
    <property type="match status" value="1"/>
</dbReference>
<dbReference type="FunFam" id="1.20.245.10:FF:000002">
    <property type="entry name" value="Lipoxygenase"/>
    <property type="match status" value="1"/>
</dbReference>
<dbReference type="FunFam" id="3.10.450.60:FF:000002">
    <property type="entry name" value="Lipoxygenase"/>
    <property type="match status" value="1"/>
</dbReference>
<dbReference type="FunFam" id="4.10.375.10:FF:000001">
    <property type="entry name" value="Lipoxygenase"/>
    <property type="match status" value="1"/>
</dbReference>
<dbReference type="Gene3D" id="3.10.450.60">
    <property type="match status" value="1"/>
</dbReference>
<dbReference type="Gene3D" id="4.10.375.10">
    <property type="entry name" value="Lipoxygenase-1, Domain 2"/>
    <property type="match status" value="1"/>
</dbReference>
<dbReference type="Gene3D" id="4.10.372.10">
    <property type="entry name" value="Lipoxygenase-1, Domain 3"/>
    <property type="match status" value="1"/>
</dbReference>
<dbReference type="Gene3D" id="1.20.245.10">
    <property type="entry name" value="Lipoxygenase-1, Domain 5"/>
    <property type="match status" value="1"/>
</dbReference>
<dbReference type="Gene3D" id="2.60.60.20">
    <property type="entry name" value="PLAT/LH2 domain"/>
    <property type="match status" value="1"/>
</dbReference>
<dbReference type="InterPro" id="IPR000907">
    <property type="entry name" value="LipOase"/>
</dbReference>
<dbReference type="InterPro" id="IPR013819">
    <property type="entry name" value="LipOase_C"/>
</dbReference>
<dbReference type="InterPro" id="IPR036226">
    <property type="entry name" value="LipOase_C_sf"/>
</dbReference>
<dbReference type="InterPro" id="IPR020834">
    <property type="entry name" value="LipOase_CS"/>
</dbReference>
<dbReference type="InterPro" id="IPR020833">
    <property type="entry name" value="LipOase_Fe_BS"/>
</dbReference>
<dbReference type="InterPro" id="IPR001246">
    <property type="entry name" value="LipOase_plant"/>
</dbReference>
<dbReference type="InterPro" id="IPR042057">
    <property type="entry name" value="Lipoxy_PLAT/LH2"/>
</dbReference>
<dbReference type="InterPro" id="IPR027433">
    <property type="entry name" value="Lipoxygenase_dom_3"/>
</dbReference>
<dbReference type="InterPro" id="IPR001024">
    <property type="entry name" value="PLAT/LH2_dom"/>
</dbReference>
<dbReference type="InterPro" id="IPR036392">
    <property type="entry name" value="PLAT/LH2_dom_sf"/>
</dbReference>
<dbReference type="PANTHER" id="PTHR11771">
    <property type="entry name" value="LIPOXYGENASE"/>
    <property type="match status" value="1"/>
</dbReference>
<dbReference type="Pfam" id="PF00305">
    <property type="entry name" value="Lipoxygenase"/>
    <property type="match status" value="1"/>
</dbReference>
<dbReference type="Pfam" id="PF01477">
    <property type="entry name" value="PLAT"/>
    <property type="match status" value="1"/>
</dbReference>
<dbReference type="PRINTS" id="PR00087">
    <property type="entry name" value="LIPOXYGENASE"/>
</dbReference>
<dbReference type="PRINTS" id="PR00468">
    <property type="entry name" value="PLTLPOXGNASE"/>
</dbReference>
<dbReference type="SMART" id="SM00308">
    <property type="entry name" value="LH2"/>
    <property type="match status" value="1"/>
</dbReference>
<dbReference type="SUPFAM" id="SSF49723">
    <property type="entry name" value="Lipase/lipooxygenase domain (PLAT/LH2 domain)"/>
    <property type="match status" value="1"/>
</dbReference>
<dbReference type="SUPFAM" id="SSF48484">
    <property type="entry name" value="Lipoxigenase"/>
    <property type="match status" value="1"/>
</dbReference>
<dbReference type="PROSITE" id="PS00711">
    <property type="entry name" value="LIPOXYGENASE_1"/>
    <property type="match status" value="1"/>
</dbReference>
<dbReference type="PROSITE" id="PS00081">
    <property type="entry name" value="LIPOXYGENASE_2"/>
    <property type="match status" value="1"/>
</dbReference>
<dbReference type="PROSITE" id="PS51393">
    <property type="entry name" value="LIPOXYGENASE_3"/>
    <property type="match status" value="1"/>
</dbReference>
<dbReference type="PROSITE" id="PS50095">
    <property type="entry name" value="PLAT"/>
    <property type="match status" value="1"/>
</dbReference>
<reference key="1">
    <citation type="journal article" date="2005" name="Genome Res.">
        <title>Sequence, annotation, and analysis of synteny between rice chromosome 3 and diverged grass species.</title>
        <authorList>
            <consortium name="The rice chromosome 3 sequencing consortium"/>
            <person name="Buell C.R."/>
            <person name="Yuan Q."/>
            <person name="Ouyang S."/>
            <person name="Liu J."/>
            <person name="Zhu W."/>
            <person name="Wang A."/>
            <person name="Maiti R."/>
            <person name="Haas B."/>
            <person name="Wortman J."/>
            <person name="Pertea M."/>
            <person name="Jones K.M."/>
            <person name="Kim M."/>
            <person name="Overton L."/>
            <person name="Tsitrin T."/>
            <person name="Fadrosh D."/>
            <person name="Bera J."/>
            <person name="Weaver B."/>
            <person name="Jin S."/>
            <person name="Johri S."/>
            <person name="Reardon M."/>
            <person name="Webb K."/>
            <person name="Hill J."/>
            <person name="Moffat K."/>
            <person name="Tallon L."/>
            <person name="Van Aken S."/>
            <person name="Lewis M."/>
            <person name="Utterback T."/>
            <person name="Feldblyum T."/>
            <person name="Zismann V."/>
            <person name="Iobst S."/>
            <person name="Hsiao J."/>
            <person name="de Vazeille A.R."/>
            <person name="Salzberg S.L."/>
            <person name="White O."/>
            <person name="Fraser C.M."/>
            <person name="Yu Y."/>
            <person name="Kim H."/>
            <person name="Rambo T."/>
            <person name="Currie J."/>
            <person name="Collura K."/>
            <person name="Kernodle-Thompson S."/>
            <person name="Wei F."/>
            <person name="Kudrna K."/>
            <person name="Ammiraju J.S.S."/>
            <person name="Luo M."/>
            <person name="Goicoechea J.L."/>
            <person name="Wing R.A."/>
            <person name="Henry D."/>
            <person name="Oates R."/>
            <person name="Palmer M."/>
            <person name="Pries G."/>
            <person name="Saski C."/>
            <person name="Simmons J."/>
            <person name="Soderlund C."/>
            <person name="Nelson W."/>
            <person name="de la Bastide M."/>
            <person name="Spiegel L."/>
            <person name="Nascimento L."/>
            <person name="Huang E."/>
            <person name="Preston R."/>
            <person name="Zutavern T."/>
            <person name="Palmer L."/>
            <person name="O'Shaughnessy A."/>
            <person name="Dike S."/>
            <person name="McCombie W.R."/>
            <person name="Minx P."/>
            <person name="Cordum H."/>
            <person name="Wilson R."/>
            <person name="Jin W."/>
            <person name="Lee H.R."/>
            <person name="Jiang J."/>
            <person name="Jackson S."/>
        </authorList>
    </citation>
    <scope>NUCLEOTIDE SEQUENCE [LARGE SCALE GENOMIC DNA]</scope>
    <source>
        <strain>cv. Nipponbare</strain>
    </source>
</reference>
<reference key="2">
    <citation type="journal article" date="2005" name="Nature">
        <title>The map-based sequence of the rice genome.</title>
        <authorList>
            <consortium name="International rice genome sequencing project (IRGSP)"/>
        </authorList>
    </citation>
    <scope>NUCLEOTIDE SEQUENCE [LARGE SCALE GENOMIC DNA]</scope>
    <source>
        <strain>cv. Nipponbare</strain>
    </source>
</reference>
<reference key="3">
    <citation type="journal article" date="2008" name="Nucleic Acids Res.">
        <title>The rice annotation project database (RAP-DB): 2008 update.</title>
        <authorList>
            <consortium name="The rice annotation project (RAP)"/>
        </authorList>
    </citation>
    <scope>GENOME REANNOTATION</scope>
    <source>
        <strain>cv. Nipponbare</strain>
    </source>
</reference>
<reference key="4">
    <citation type="journal article" date="2013" name="Rice">
        <title>Improvement of the Oryza sativa Nipponbare reference genome using next generation sequence and optical map data.</title>
        <authorList>
            <person name="Kawahara Y."/>
            <person name="de la Bastide M."/>
            <person name="Hamilton J.P."/>
            <person name="Kanamori H."/>
            <person name="McCombie W.R."/>
            <person name="Ouyang S."/>
            <person name="Schwartz D.C."/>
            <person name="Tanaka T."/>
            <person name="Wu J."/>
            <person name="Zhou S."/>
            <person name="Childs K.L."/>
            <person name="Davidson R.M."/>
            <person name="Lin H."/>
            <person name="Quesada-Ocampo L."/>
            <person name="Vaillancourt B."/>
            <person name="Sakai H."/>
            <person name="Lee S.S."/>
            <person name="Kim J."/>
            <person name="Numa H."/>
            <person name="Itoh T."/>
            <person name="Buell C.R."/>
            <person name="Matsumoto T."/>
        </authorList>
    </citation>
    <scope>GENOME REANNOTATION</scope>
    <source>
        <strain>cv. Nipponbare</strain>
    </source>
</reference>
<reference key="5">
    <citation type="journal article" date="2003" name="Science">
        <title>Collection, mapping, and annotation of over 28,000 cDNA clones from japonica rice.</title>
        <authorList>
            <consortium name="The rice full-length cDNA consortium"/>
        </authorList>
    </citation>
    <scope>NUCLEOTIDE SEQUENCE [LARGE SCALE MRNA]</scope>
    <source>
        <strain>cv. Nipponbare</strain>
    </source>
</reference>
<sequence>MELTGLTRAAAAATVTPPAPRRGWGELRFAPLLPGERHGRRKVVVAAISEEVPRLAASPSSGIKGGGAGERRPAPEKVALRAALTVRRKQKEDIKEAVAGHLDALWDMVGRNVVLELISTKIHPRTKKPMQSGRVSIKDWCQKRGAKGDHVVYTAEFTVDADFGEPGAIAVANRHNREFFLESIVVEGGGLPCGPVHFACNSWVQSTRELPTKRVFFSNKPYLPSETPPGLRELREKELKDLRGDGTGVRKLSDRIYDYATYNDLGNPDKGKEFIRPILGGEKIPYPRRCRTGRPPTDTNMLAESRVEKPHPIYVPRDEAFEELKQGAFSSGRLRAVLHTLIPSLIASISAETHNFQGFHHIDNLYKEGLRLKLGLQEHLFQKIPLVQKIQESSEGMLRYDTPSILSKDKFAWLRDDEFARQAVAGINPVNIERLQVFPPVSKLDPAIYGPPESSITETHIAGHLNGLTVQQAMDEAKLFIVDYHDAYLPFLDRINAIDGRKAYATRTIFFLTEAGTLKPIAIELSLPPAKPGEPRPSKVLTPPYDATSNWLWMLAKAHVSSNDAGVHQLVNHWLRTHATMEPFILAAHRHMSAMHPIFKLLHPHMRYTLEINALARQSLINADGVIESCFTPGPVSGEISAAYYRNHWRFDLEGLPSDLIRRGVAVEDATQPHGVRLLIEDYPYANDGLLLWSAIRSWVESYVQLYYPDAGTVQCDLELQGWYHESIHVGHGDLRHAPWWPPLSTPVDLASILTTLVWLASAQHAALNFGQYPLGGYVPNRPPLIRRLLPDLERDAAEYAAFLADPHRFFLNAMPGVLEATKFMAVVDTLSTHSPDEEYLGEGRDEGGVPWTADEAAVAAHGMFAADVRRAEETIERRNADHGRKNRCGAGVLPYELLAPSSPPGVTCRGVPNSISI</sequence>
<organism>
    <name type="scientific">Oryza sativa subsp. japonica</name>
    <name type="common">Rice</name>
    <dbReference type="NCBI Taxonomy" id="39947"/>
    <lineage>
        <taxon>Eukaryota</taxon>
        <taxon>Viridiplantae</taxon>
        <taxon>Streptophyta</taxon>
        <taxon>Embryophyta</taxon>
        <taxon>Tracheophyta</taxon>
        <taxon>Spermatophyta</taxon>
        <taxon>Magnoliopsida</taxon>
        <taxon>Liliopsida</taxon>
        <taxon>Poales</taxon>
        <taxon>Poaceae</taxon>
        <taxon>BOP clade</taxon>
        <taxon>Oryzoideae</taxon>
        <taxon>Oryzeae</taxon>
        <taxon>Oryzinae</taxon>
        <taxon>Oryza</taxon>
        <taxon>Oryza sativa</taxon>
    </lineage>
</organism>
<proteinExistence type="evidence at transcript level"/>
<feature type="chain" id="PRO_0000220712" description="Probable lipoxygenase 6">
    <location>
        <begin position="1"/>
        <end position="918"/>
    </location>
</feature>
<feature type="domain" description="PLAT" evidence="2">
    <location>
        <begin position="90"/>
        <end position="218"/>
    </location>
</feature>
<feature type="domain" description="Lipoxygenase" evidence="3">
    <location>
        <begin position="221"/>
        <end position="918"/>
    </location>
</feature>
<feature type="region of interest" description="Disordered" evidence="4">
    <location>
        <begin position="56"/>
        <end position="76"/>
    </location>
</feature>
<feature type="binding site" evidence="3">
    <location>
        <position position="573"/>
    </location>
    <ligand>
        <name>Fe cation</name>
        <dbReference type="ChEBI" id="CHEBI:24875"/>
        <note>catalytic</note>
    </ligand>
</feature>
<feature type="binding site" evidence="3">
    <location>
        <position position="578"/>
    </location>
    <ligand>
        <name>Fe cation</name>
        <dbReference type="ChEBI" id="CHEBI:24875"/>
        <note>catalytic</note>
    </ligand>
</feature>
<feature type="binding site" evidence="3">
    <location>
        <position position="765"/>
    </location>
    <ligand>
        <name>Fe cation</name>
        <dbReference type="ChEBI" id="CHEBI:24875"/>
        <note>catalytic</note>
    </ligand>
</feature>
<feature type="binding site" evidence="3">
    <location>
        <position position="769"/>
    </location>
    <ligand>
        <name>Fe cation</name>
        <dbReference type="ChEBI" id="CHEBI:24875"/>
        <note>catalytic</note>
    </ligand>
</feature>
<feature type="binding site" evidence="3">
    <location>
        <position position="918"/>
    </location>
    <ligand>
        <name>Fe cation</name>
        <dbReference type="ChEBI" id="CHEBI:24875"/>
        <note>catalytic</note>
    </ligand>
</feature>
<comment type="function">
    <text evidence="1">Plant lipoxygenase may be involved in a number of diverse aspects of plant physiology including growth and development, pest resistance, and senescence or responses to wounding. Catalyzes the hydroperoxidation of lipids containing a cis,cis-1,4-pentadiene structure (By similarity).</text>
</comment>
<comment type="catalytic activity">
    <reaction>
        <text>(9Z,12Z)-octadecadienoate + O2 = (13S)-hydroperoxy-(9Z,11E)-octadecadienoate</text>
        <dbReference type="Rhea" id="RHEA:22780"/>
        <dbReference type="ChEBI" id="CHEBI:15379"/>
        <dbReference type="ChEBI" id="CHEBI:30245"/>
        <dbReference type="ChEBI" id="CHEBI:57466"/>
        <dbReference type="EC" id="1.13.11.12"/>
    </reaction>
</comment>
<comment type="catalytic activity">
    <reaction>
        <text>(9Z,12Z,15Z)-octadecatrienoate + O2 = (13S)-hydroperoxy-(9Z,11E,15Z)-octadecatrienoate</text>
        <dbReference type="Rhea" id="RHEA:34495"/>
        <dbReference type="ChEBI" id="CHEBI:15379"/>
        <dbReference type="ChEBI" id="CHEBI:32387"/>
        <dbReference type="ChEBI" id="CHEBI:58757"/>
        <dbReference type="EC" id="1.13.11.12"/>
    </reaction>
</comment>
<comment type="cofactor">
    <cofactor evidence="3">
        <name>Fe cation</name>
        <dbReference type="ChEBI" id="CHEBI:24875"/>
    </cofactor>
    <text evidence="3">Binds 1 Fe cation per subunit. Iron is tightly bound.</text>
</comment>
<comment type="pathway">
    <text evidence="3">Lipid metabolism; oxylipin biosynthesis.</text>
</comment>
<comment type="similarity">
    <text evidence="5">Belongs to the lipoxygenase family.</text>
</comment>
<comment type="sequence caution" evidence="5">
    <conflict type="erroneous gene model prediction">
        <sequence resource="EMBL-CDS" id="AAN65431"/>
    </conflict>
</comment>
<comment type="sequence caution" evidence="5">
    <conflict type="erroneous gene model prediction">
        <sequence resource="EMBL-CDS" id="AAO13474"/>
    </conflict>
</comment>
<evidence type="ECO:0000250" key="1"/>
<evidence type="ECO:0000255" key="2">
    <source>
        <dbReference type="PROSITE-ProRule" id="PRU00152"/>
    </source>
</evidence>
<evidence type="ECO:0000255" key="3">
    <source>
        <dbReference type="PROSITE-ProRule" id="PRU00726"/>
    </source>
</evidence>
<evidence type="ECO:0000256" key="4">
    <source>
        <dbReference type="SAM" id="MobiDB-lite"/>
    </source>
</evidence>
<evidence type="ECO:0000305" key="5"/>
<evidence type="ECO:0000312" key="6">
    <source>
        <dbReference type="EMBL" id="ABF94297.1"/>
    </source>
</evidence>
<evidence type="ECO:0000312" key="7">
    <source>
        <dbReference type="EMBL" id="BAF11072.1"/>
    </source>
</evidence>
<protein>
    <recommendedName>
        <fullName>Probable lipoxygenase 6</fullName>
        <ecNumber>1.13.11.12</ecNumber>
    </recommendedName>
</protein>
<gene>
    <name evidence="7" type="ordered locus">Os03g0179900</name>
    <name evidence="6" type="ordered locus">LOC_Os03g08220</name>
    <name type="ORF">OSJNBa0050H14.14</name>
    <name type="ORF">OSJNBb0076N15.1</name>
</gene>
<accession>Q8H016</accession>
<accession>A0A0P0VTS2</accession>
<accession>Q10QX5</accession>
<accession>Q8H7L4</accession>